<comment type="function">
    <text evidence="1">Binds directly to 23S ribosomal RNA and is necessary for the in vitro assembly process of the 50S ribosomal subunit. It is not involved in the protein synthesizing functions of that subunit.</text>
</comment>
<comment type="similarity">
    <text evidence="1">Belongs to the bacterial ribosomal protein bL20 family.</text>
</comment>
<name>RL20_XYLFA</name>
<gene>
    <name evidence="1" type="primary">rplT</name>
    <name type="ordered locus">XF_0740</name>
</gene>
<accession>Q9PFD8</accession>
<evidence type="ECO:0000255" key="1">
    <source>
        <dbReference type="HAMAP-Rule" id="MF_00382"/>
    </source>
</evidence>
<evidence type="ECO:0000305" key="2"/>
<proteinExistence type="inferred from homology"/>
<sequence length="119" mass="13499">MARVKRGVQARRRHKKILSLAKGYYNARRKVFRVAKQAVIKAQQYAYIGRKQKKRNFRSLWIVRINAAARINGLSYSRFMNGLLKCGITLDRKVLADIAVHDPAGFTALAEKAKSILAA</sequence>
<reference key="1">
    <citation type="journal article" date="2000" name="Nature">
        <title>The genome sequence of the plant pathogen Xylella fastidiosa.</title>
        <authorList>
            <person name="Simpson A.J.G."/>
            <person name="Reinach F.C."/>
            <person name="Arruda P."/>
            <person name="Abreu F.A."/>
            <person name="Acencio M."/>
            <person name="Alvarenga R."/>
            <person name="Alves L.M.C."/>
            <person name="Araya J.E."/>
            <person name="Baia G.S."/>
            <person name="Baptista C.S."/>
            <person name="Barros M.H."/>
            <person name="Bonaccorsi E.D."/>
            <person name="Bordin S."/>
            <person name="Bove J.M."/>
            <person name="Briones M.R.S."/>
            <person name="Bueno M.R.P."/>
            <person name="Camargo A.A."/>
            <person name="Camargo L.E.A."/>
            <person name="Carraro D.M."/>
            <person name="Carrer H."/>
            <person name="Colauto N.B."/>
            <person name="Colombo C."/>
            <person name="Costa F.F."/>
            <person name="Costa M.C.R."/>
            <person name="Costa-Neto C.M."/>
            <person name="Coutinho L.L."/>
            <person name="Cristofani M."/>
            <person name="Dias-Neto E."/>
            <person name="Docena C."/>
            <person name="El-Dorry H."/>
            <person name="Facincani A.P."/>
            <person name="Ferreira A.J.S."/>
            <person name="Ferreira V.C.A."/>
            <person name="Ferro J.A."/>
            <person name="Fraga J.S."/>
            <person name="Franca S.C."/>
            <person name="Franco M.C."/>
            <person name="Frohme M."/>
            <person name="Furlan L.R."/>
            <person name="Garnier M."/>
            <person name="Goldman G.H."/>
            <person name="Goldman M.H.S."/>
            <person name="Gomes S.L."/>
            <person name="Gruber A."/>
            <person name="Ho P.L."/>
            <person name="Hoheisel J.D."/>
            <person name="Junqueira M.L."/>
            <person name="Kemper E.L."/>
            <person name="Kitajima J.P."/>
            <person name="Krieger J.E."/>
            <person name="Kuramae E.E."/>
            <person name="Laigret F."/>
            <person name="Lambais M.R."/>
            <person name="Leite L.C.C."/>
            <person name="Lemos E.G.M."/>
            <person name="Lemos M.V.F."/>
            <person name="Lopes S.A."/>
            <person name="Lopes C.R."/>
            <person name="Machado J.A."/>
            <person name="Machado M.A."/>
            <person name="Madeira A.M.B.N."/>
            <person name="Madeira H.M.F."/>
            <person name="Marino C.L."/>
            <person name="Marques M.V."/>
            <person name="Martins E.A.L."/>
            <person name="Martins E.M.F."/>
            <person name="Matsukuma A.Y."/>
            <person name="Menck C.F.M."/>
            <person name="Miracca E.C."/>
            <person name="Miyaki C.Y."/>
            <person name="Monteiro-Vitorello C.B."/>
            <person name="Moon D.H."/>
            <person name="Nagai M.A."/>
            <person name="Nascimento A.L.T.O."/>
            <person name="Netto L.E.S."/>
            <person name="Nhani A. Jr."/>
            <person name="Nobrega F.G."/>
            <person name="Nunes L.R."/>
            <person name="Oliveira M.A."/>
            <person name="de Oliveira M.C."/>
            <person name="de Oliveira R.C."/>
            <person name="Palmieri D.A."/>
            <person name="Paris A."/>
            <person name="Peixoto B.R."/>
            <person name="Pereira G.A.G."/>
            <person name="Pereira H.A. Jr."/>
            <person name="Pesquero J.B."/>
            <person name="Quaggio R.B."/>
            <person name="Roberto P.G."/>
            <person name="Rodrigues V."/>
            <person name="de Rosa A.J.M."/>
            <person name="de Rosa V.E. Jr."/>
            <person name="de Sa R.G."/>
            <person name="Santelli R.V."/>
            <person name="Sawasaki H.E."/>
            <person name="da Silva A.C.R."/>
            <person name="da Silva A.M."/>
            <person name="da Silva F.R."/>
            <person name="Silva W.A. Jr."/>
            <person name="da Silveira J.F."/>
            <person name="Silvestri M.L.Z."/>
            <person name="Siqueira W.J."/>
            <person name="de Souza A.A."/>
            <person name="de Souza A.P."/>
            <person name="Terenzi M.F."/>
            <person name="Truffi D."/>
            <person name="Tsai S.M."/>
            <person name="Tsuhako M.H."/>
            <person name="Vallada H."/>
            <person name="Van Sluys M.A."/>
            <person name="Verjovski-Almeida S."/>
            <person name="Vettore A.L."/>
            <person name="Zago M.A."/>
            <person name="Zatz M."/>
            <person name="Meidanis J."/>
            <person name="Setubal J.C."/>
        </authorList>
    </citation>
    <scope>NUCLEOTIDE SEQUENCE [LARGE SCALE GENOMIC DNA]</scope>
    <source>
        <strain>9a5c</strain>
    </source>
</reference>
<organism>
    <name type="scientific">Xylella fastidiosa (strain 9a5c)</name>
    <dbReference type="NCBI Taxonomy" id="160492"/>
    <lineage>
        <taxon>Bacteria</taxon>
        <taxon>Pseudomonadati</taxon>
        <taxon>Pseudomonadota</taxon>
        <taxon>Gammaproteobacteria</taxon>
        <taxon>Lysobacterales</taxon>
        <taxon>Lysobacteraceae</taxon>
        <taxon>Xylella</taxon>
    </lineage>
</organism>
<dbReference type="EMBL" id="AE003849">
    <property type="protein sequence ID" value="AAF83550.1"/>
    <property type="molecule type" value="Genomic_DNA"/>
</dbReference>
<dbReference type="PIR" id="A82767">
    <property type="entry name" value="A82767"/>
</dbReference>
<dbReference type="RefSeq" id="WP_010893263.1">
    <property type="nucleotide sequence ID" value="NC_002488.3"/>
</dbReference>
<dbReference type="SMR" id="Q9PFD8"/>
<dbReference type="STRING" id="160492.XF_0740"/>
<dbReference type="KEGG" id="xfa:XF_0740"/>
<dbReference type="eggNOG" id="COG0292">
    <property type="taxonomic scope" value="Bacteria"/>
</dbReference>
<dbReference type="HOGENOM" id="CLU_123265_0_1_6"/>
<dbReference type="Proteomes" id="UP000000812">
    <property type="component" value="Chromosome"/>
</dbReference>
<dbReference type="GO" id="GO:1990904">
    <property type="term" value="C:ribonucleoprotein complex"/>
    <property type="evidence" value="ECO:0007669"/>
    <property type="project" value="UniProtKB-KW"/>
</dbReference>
<dbReference type="GO" id="GO:0005840">
    <property type="term" value="C:ribosome"/>
    <property type="evidence" value="ECO:0007669"/>
    <property type="project" value="UniProtKB-KW"/>
</dbReference>
<dbReference type="GO" id="GO:0019843">
    <property type="term" value="F:rRNA binding"/>
    <property type="evidence" value="ECO:0007669"/>
    <property type="project" value="UniProtKB-UniRule"/>
</dbReference>
<dbReference type="GO" id="GO:0003735">
    <property type="term" value="F:structural constituent of ribosome"/>
    <property type="evidence" value="ECO:0007669"/>
    <property type="project" value="InterPro"/>
</dbReference>
<dbReference type="GO" id="GO:0000027">
    <property type="term" value="P:ribosomal large subunit assembly"/>
    <property type="evidence" value="ECO:0007669"/>
    <property type="project" value="UniProtKB-UniRule"/>
</dbReference>
<dbReference type="GO" id="GO:0006412">
    <property type="term" value="P:translation"/>
    <property type="evidence" value="ECO:0007669"/>
    <property type="project" value="InterPro"/>
</dbReference>
<dbReference type="CDD" id="cd07026">
    <property type="entry name" value="Ribosomal_L20"/>
    <property type="match status" value="1"/>
</dbReference>
<dbReference type="FunFam" id="1.10.1900.20:FF:000001">
    <property type="entry name" value="50S ribosomal protein L20"/>
    <property type="match status" value="1"/>
</dbReference>
<dbReference type="Gene3D" id="6.10.160.10">
    <property type="match status" value="1"/>
</dbReference>
<dbReference type="Gene3D" id="1.10.1900.20">
    <property type="entry name" value="Ribosomal protein L20"/>
    <property type="match status" value="1"/>
</dbReference>
<dbReference type="HAMAP" id="MF_00382">
    <property type="entry name" value="Ribosomal_bL20"/>
    <property type="match status" value="1"/>
</dbReference>
<dbReference type="InterPro" id="IPR005813">
    <property type="entry name" value="Ribosomal_bL20"/>
</dbReference>
<dbReference type="InterPro" id="IPR049946">
    <property type="entry name" value="RIBOSOMAL_L20_CS"/>
</dbReference>
<dbReference type="InterPro" id="IPR035566">
    <property type="entry name" value="Ribosomal_protein_bL20_C"/>
</dbReference>
<dbReference type="NCBIfam" id="TIGR01032">
    <property type="entry name" value="rplT_bact"/>
    <property type="match status" value="1"/>
</dbReference>
<dbReference type="PANTHER" id="PTHR10986">
    <property type="entry name" value="39S RIBOSOMAL PROTEIN L20"/>
    <property type="match status" value="1"/>
</dbReference>
<dbReference type="Pfam" id="PF00453">
    <property type="entry name" value="Ribosomal_L20"/>
    <property type="match status" value="1"/>
</dbReference>
<dbReference type="PRINTS" id="PR00062">
    <property type="entry name" value="RIBOSOMALL20"/>
</dbReference>
<dbReference type="SUPFAM" id="SSF74731">
    <property type="entry name" value="Ribosomal protein L20"/>
    <property type="match status" value="1"/>
</dbReference>
<dbReference type="PROSITE" id="PS00937">
    <property type="entry name" value="RIBOSOMAL_L20"/>
    <property type="match status" value="1"/>
</dbReference>
<feature type="chain" id="PRO_0000177269" description="Large ribosomal subunit protein bL20">
    <location>
        <begin position="1"/>
        <end position="119"/>
    </location>
</feature>
<protein>
    <recommendedName>
        <fullName evidence="1">Large ribosomal subunit protein bL20</fullName>
    </recommendedName>
    <alternativeName>
        <fullName evidence="2">50S ribosomal protein L20</fullName>
    </alternativeName>
</protein>
<keyword id="KW-0687">Ribonucleoprotein</keyword>
<keyword id="KW-0689">Ribosomal protein</keyword>
<keyword id="KW-0694">RNA-binding</keyword>
<keyword id="KW-0699">rRNA-binding</keyword>